<accession>Q3BNA6</accession>
<gene>
    <name evidence="1" type="primary">dut</name>
    <name type="ordered locus">XCV4026</name>
</gene>
<proteinExistence type="inferred from homology"/>
<feature type="chain" id="PRO_0000231437" description="Deoxyuridine 5'-triphosphate nucleotidohydrolase">
    <location>
        <begin position="1"/>
        <end position="155"/>
    </location>
</feature>
<feature type="binding site" evidence="1">
    <location>
        <begin position="74"/>
        <end position="76"/>
    </location>
    <ligand>
        <name>substrate</name>
    </ligand>
</feature>
<feature type="binding site" evidence="1">
    <location>
        <position position="87"/>
    </location>
    <ligand>
        <name>substrate</name>
    </ligand>
</feature>
<feature type="binding site" evidence="1">
    <location>
        <begin position="91"/>
        <end position="93"/>
    </location>
    <ligand>
        <name>substrate</name>
    </ligand>
</feature>
<sequence>MSPPTQSLQVKLLDPRFGDLWPLPAYATESSAGMDLRAALEAPMTLQPGDAALIPSGIAIHLADPQLCAVILPRSGLGHRHGIVLGNGTGLIDADYQGPLLISTWNRGREAFTIEPGDRIAQLVILPIVRMGLQVVDTFVDSARGAGGFGHTGVR</sequence>
<keyword id="KW-0378">Hydrolase</keyword>
<keyword id="KW-0460">Magnesium</keyword>
<keyword id="KW-0479">Metal-binding</keyword>
<keyword id="KW-0546">Nucleotide metabolism</keyword>
<evidence type="ECO:0000255" key="1">
    <source>
        <dbReference type="HAMAP-Rule" id="MF_00116"/>
    </source>
</evidence>
<protein>
    <recommendedName>
        <fullName evidence="1">Deoxyuridine 5'-triphosphate nucleotidohydrolase</fullName>
        <shortName evidence="1">dUTPase</shortName>
        <ecNumber evidence="1">3.6.1.23</ecNumber>
    </recommendedName>
    <alternativeName>
        <fullName evidence="1">dUTP pyrophosphatase</fullName>
    </alternativeName>
</protein>
<organism>
    <name type="scientific">Xanthomonas euvesicatoria pv. vesicatoria (strain 85-10)</name>
    <name type="common">Xanthomonas campestris pv. vesicatoria</name>
    <dbReference type="NCBI Taxonomy" id="316273"/>
    <lineage>
        <taxon>Bacteria</taxon>
        <taxon>Pseudomonadati</taxon>
        <taxon>Pseudomonadota</taxon>
        <taxon>Gammaproteobacteria</taxon>
        <taxon>Lysobacterales</taxon>
        <taxon>Lysobacteraceae</taxon>
        <taxon>Xanthomonas</taxon>
    </lineage>
</organism>
<comment type="function">
    <text evidence="1">This enzyme is involved in nucleotide metabolism: it produces dUMP, the immediate precursor of thymidine nucleotides and it decreases the intracellular concentration of dUTP so that uracil cannot be incorporated into DNA.</text>
</comment>
<comment type="catalytic activity">
    <reaction evidence="1">
        <text>dUTP + H2O = dUMP + diphosphate + H(+)</text>
        <dbReference type="Rhea" id="RHEA:10248"/>
        <dbReference type="ChEBI" id="CHEBI:15377"/>
        <dbReference type="ChEBI" id="CHEBI:15378"/>
        <dbReference type="ChEBI" id="CHEBI:33019"/>
        <dbReference type="ChEBI" id="CHEBI:61555"/>
        <dbReference type="ChEBI" id="CHEBI:246422"/>
        <dbReference type="EC" id="3.6.1.23"/>
    </reaction>
</comment>
<comment type="cofactor">
    <cofactor evidence="1">
        <name>Mg(2+)</name>
        <dbReference type="ChEBI" id="CHEBI:18420"/>
    </cofactor>
</comment>
<comment type="pathway">
    <text evidence="1">Pyrimidine metabolism; dUMP biosynthesis; dUMP from dCTP (dUTP route): step 2/2.</text>
</comment>
<comment type="similarity">
    <text evidence="1">Belongs to the dUTPase family.</text>
</comment>
<reference key="1">
    <citation type="journal article" date="2005" name="J. Bacteriol.">
        <title>Insights into genome plasticity and pathogenicity of the plant pathogenic Bacterium Xanthomonas campestris pv. vesicatoria revealed by the complete genome sequence.</title>
        <authorList>
            <person name="Thieme F."/>
            <person name="Koebnik R."/>
            <person name="Bekel T."/>
            <person name="Berger C."/>
            <person name="Boch J."/>
            <person name="Buettner D."/>
            <person name="Caldana C."/>
            <person name="Gaigalat L."/>
            <person name="Goesmann A."/>
            <person name="Kay S."/>
            <person name="Kirchner O."/>
            <person name="Lanz C."/>
            <person name="Linke B."/>
            <person name="McHardy A.C."/>
            <person name="Meyer F."/>
            <person name="Mittenhuber G."/>
            <person name="Nies D.H."/>
            <person name="Niesbach-Kloesgen U."/>
            <person name="Patschkowski T."/>
            <person name="Rueckert C."/>
            <person name="Rupp O."/>
            <person name="Schneiker S."/>
            <person name="Schuster S.C."/>
            <person name="Vorhoelter F.J."/>
            <person name="Weber E."/>
            <person name="Puehler A."/>
            <person name="Bonas U."/>
            <person name="Bartels D."/>
            <person name="Kaiser O."/>
        </authorList>
    </citation>
    <scope>NUCLEOTIDE SEQUENCE [LARGE SCALE GENOMIC DNA]</scope>
    <source>
        <strain>85-10</strain>
    </source>
</reference>
<dbReference type="EC" id="3.6.1.23" evidence="1"/>
<dbReference type="EMBL" id="AM039952">
    <property type="protein sequence ID" value="CAJ25757.1"/>
    <property type="molecule type" value="Genomic_DNA"/>
</dbReference>
<dbReference type="RefSeq" id="WP_007964142.1">
    <property type="nucleotide sequence ID" value="NZ_CP017190.1"/>
</dbReference>
<dbReference type="SMR" id="Q3BNA6"/>
<dbReference type="STRING" id="456327.BJD11_02480"/>
<dbReference type="GeneID" id="97512090"/>
<dbReference type="KEGG" id="xcv:XCV4026"/>
<dbReference type="eggNOG" id="COG0756">
    <property type="taxonomic scope" value="Bacteria"/>
</dbReference>
<dbReference type="HOGENOM" id="CLU_068508_1_1_6"/>
<dbReference type="UniPathway" id="UPA00610">
    <property type="reaction ID" value="UER00666"/>
</dbReference>
<dbReference type="Proteomes" id="UP000007069">
    <property type="component" value="Chromosome"/>
</dbReference>
<dbReference type="GO" id="GO:0004170">
    <property type="term" value="F:dUTP diphosphatase activity"/>
    <property type="evidence" value="ECO:0007669"/>
    <property type="project" value="UniProtKB-UniRule"/>
</dbReference>
<dbReference type="GO" id="GO:0000287">
    <property type="term" value="F:magnesium ion binding"/>
    <property type="evidence" value="ECO:0007669"/>
    <property type="project" value="UniProtKB-UniRule"/>
</dbReference>
<dbReference type="GO" id="GO:0006226">
    <property type="term" value="P:dUMP biosynthetic process"/>
    <property type="evidence" value="ECO:0007669"/>
    <property type="project" value="UniProtKB-UniRule"/>
</dbReference>
<dbReference type="GO" id="GO:0046081">
    <property type="term" value="P:dUTP catabolic process"/>
    <property type="evidence" value="ECO:0007669"/>
    <property type="project" value="InterPro"/>
</dbReference>
<dbReference type="CDD" id="cd07557">
    <property type="entry name" value="trimeric_dUTPase"/>
    <property type="match status" value="1"/>
</dbReference>
<dbReference type="FunFam" id="2.70.40.10:FF:000002">
    <property type="entry name" value="dUTP diphosphatase"/>
    <property type="match status" value="1"/>
</dbReference>
<dbReference type="Gene3D" id="2.70.40.10">
    <property type="match status" value="1"/>
</dbReference>
<dbReference type="HAMAP" id="MF_00116">
    <property type="entry name" value="dUTPase_bact"/>
    <property type="match status" value="1"/>
</dbReference>
<dbReference type="InterPro" id="IPR008181">
    <property type="entry name" value="dUTPase"/>
</dbReference>
<dbReference type="InterPro" id="IPR029054">
    <property type="entry name" value="dUTPase-like"/>
</dbReference>
<dbReference type="InterPro" id="IPR036157">
    <property type="entry name" value="dUTPase-like_sf"/>
</dbReference>
<dbReference type="InterPro" id="IPR033704">
    <property type="entry name" value="dUTPase_trimeric"/>
</dbReference>
<dbReference type="NCBIfam" id="TIGR00576">
    <property type="entry name" value="dut"/>
    <property type="match status" value="1"/>
</dbReference>
<dbReference type="NCBIfam" id="NF001862">
    <property type="entry name" value="PRK00601.1"/>
    <property type="match status" value="1"/>
</dbReference>
<dbReference type="PANTHER" id="PTHR11241">
    <property type="entry name" value="DEOXYURIDINE 5'-TRIPHOSPHATE NUCLEOTIDOHYDROLASE"/>
    <property type="match status" value="1"/>
</dbReference>
<dbReference type="PANTHER" id="PTHR11241:SF0">
    <property type="entry name" value="DEOXYURIDINE 5'-TRIPHOSPHATE NUCLEOTIDOHYDROLASE"/>
    <property type="match status" value="1"/>
</dbReference>
<dbReference type="Pfam" id="PF00692">
    <property type="entry name" value="dUTPase"/>
    <property type="match status" value="1"/>
</dbReference>
<dbReference type="SUPFAM" id="SSF51283">
    <property type="entry name" value="dUTPase-like"/>
    <property type="match status" value="1"/>
</dbReference>
<name>DUT_XANE5</name>